<reference key="1">
    <citation type="journal article" date="2003" name="Genome Res.">
        <title>Comparative genome analysis of Vibrio vulnificus, a marine pathogen.</title>
        <authorList>
            <person name="Chen C.-Y."/>
            <person name="Wu K.-M."/>
            <person name="Chang Y.-C."/>
            <person name="Chang C.-H."/>
            <person name="Tsai H.-C."/>
            <person name="Liao T.-L."/>
            <person name="Liu Y.-M."/>
            <person name="Chen H.-J."/>
            <person name="Shen A.B.-T."/>
            <person name="Li J.-C."/>
            <person name="Su T.-L."/>
            <person name="Shao C.-P."/>
            <person name="Lee C.-T."/>
            <person name="Hor L.-I."/>
            <person name="Tsai S.-F."/>
        </authorList>
    </citation>
    <scope>NUCLEOTIDE SEQUENCE [LARGE SCALE GENOMIC DNA]</scope>
    <source>
        <strain>YJ016</strain>
    </source>
</reference>
<evidence type="ECO:0000255" key="1">
    <source>
        <dbReference type="HAMAP-Rule" id="MF_00789"/>
    </source>
</evidence>
<feature type="signal peptide" evidence="1">
    <location>
        <begin position="1"/>
        <end position="19"/>
    </location>
</feature>
<feature type="chain" id="PRO_0000036314" description="UPF0319 protein VV0948">
    <location>
        <begin position="20"/>
        <end position="196"/>
    </location>
</feature>
<comment type="similarity">
    <text evidence="1">Belongs to the UPF0319 family.</text>
</comment>
<organism>
    <name type="scientific">Vibrio vulnificus (strain YJ016)</name>
    <dbReference type="NCBI Taxonomy" id="196600"/>
    <lineage>
        <taxon>Bacteria</taxon>
        <taxon>Pseudomonadati</taxon>
        <taxon>Pseudomonadota</taxon>
        <taxon>Gammaproteobacteria</taxon>
        <taxon>Vibrionales</taxon>
        <taxon>Vibrionaceae</taxon>
        <taxon>Vibrio</taxon>
    </lineage>
</organism>
<gene>
    <name type="ordered locus">VV0948</name>
</gene>
<proteinExistence type="inferred from homology"/>
<dbReference type="EMBL" id="BA000037">
    <property type="protein sequence ID" value="BAC93712.1"/>
    <property type="molecule type" value="Genomic_DNA"/>
</dbReference>
<dbReference type="RefSeq" id="WP_011149740.1">
    <property type="nucleotide sequence ID" value="NC_005139.1"/>
</dbReference>
<dbReference type="SMR" id="Q7MMW9"/>
<dbReference type="KEGG" id="vvy:VV0948"/>
<dbReference type="PATRIC" id="fig|196600.6.peg.947"/>
<dbReference type="HOGENOM" id="CLU_073782_0_0_6"/>
<dbReference type="Proteomes" id="UP000002675">
    <property type="component" value="Chromosome I"/>
</dbReference>
<dbReference type="HAMAP" id="MF_00789">
    <property type="entry name" value="UPF0319"/>
    <property type="match status" value="1"/>
</dbReference>
<dbReference type="InterPro" id="IPR018635">
    <property type="entry name" value="UPF0319"/>
</dbReference>
<dbReference type="PANTHER" id="PTHR38108">
    <property type="entry name" value="UPF0319 PROTEIN YCCT"/>
    <property type="match status" value="1"/>
</dbReference>
<dbReference type="PANTHER" id="PTHR38108:SF1">
    <property type="entry name" value="UPF0319 PROTEIN YCCT"/>
    <property type="match status" value="1"/>
</dbReference>
<dbReference type="Pfam" id="PF09829">
    <property type="entry name" value="DUF2057"/>
    <property type="match status" value="1"/>
</dbReference>
<protein>
    <recommendedName>
        <fullName evidence="1">UPF0319 protein VV0948</fullName>
    </recommendedName>
</protein>
<sequence length="196" mass="22144">MKKMMILSALALFSSSLFAANLTLQKEITPQIVNGEGVTLQEVHNGNRIELKPGHNQIAVTIGQIVFEDGKRRKFDSQPLLLEFVAKPEQALTLEYGKFRTIDDAKKFENNPTVHLTDAQGNPVAFTMVQLYKGGLQGFRDYEREVADYNAQKAQKADSAPLVNHDPKAMDLKTAFKEMTRQEQQAFMQWAMQNLK</sequence>
<name>Y948_VIBVY</name>
<keyword id="KW-0732">Signal</keyword>
<accession>Q7MMW9</accession>